<reference evidence="6" key="1">
    <citation type="submission" date="2006-11" db="UniProtKB">
        <title>Molecular analysis of the bioactive components in snake venoms.</title>
        <authorList>
            <person name="Guo C.T."/>
        </authorList>
    </citation>
    <scope>PROTEIN SEQUENCE</scope>
    <scope>FUNCTION</scope>
    <scope>SUBCELLULAR LOCATION</scope>
    <scope>TISSUE SPECIFICITY</scope>
    <source>
        <strain evidence="4">China</strain>
        <tissue evidence="4">Venom</tissue>
    </source>
</reference>
<feature type="peptide" id="PRO_0000414614" description="Kunitz-type serine protease inhibitor C9">
    <location>
        <begin position="1"/>
        <end position="18" status="greater than"/>
    </location>
</feature>
<feature type="domain" description="BPTI/Kunitz inhibitor" evidence="3">
    <location>
        <begin position="7"/>
        <end position="18" status="greater than"/>
    </location>
</feature>
<feature type="site" description="Reactive bond for chymotrypsin" evidence="1">
    <location>
        <begin position="17"/>
        <end position="18"/>
    </location>
</feature>
<feature type="disulfide bond" evidence="2 3">
    <location>
        <begin position="7"/>
        <end status="unknown"/>
    </location>
</feature>
<feature type="disulfide bond" evidence="2 3">
    <location>
        <begin position="16"/>
        <end status="unknown"/>
    </location>
</feature>
<feature type="non-terminal residue" evidence="5">
    <location>
        <position position="18"/>
    </location>
</feature>
<name>VKTC9_DABSI</name>
<comment type="function">
    <text evidence="4">Serine protease inhibitor that inhibits chymotrypsin.</text>
</comment>
<comment type="subcellular location">
    <subcellularLocation>
        <location evidence="4">Secreted</location>
    </subcellularLocation>
</comment>
<comment type="tissue specificity">
    <text evidence="4">Expressed by the venom gland.</text>
</comment>
<comment type="similarity">
    <text evidence="6">Belongs to the venom Kunitz-type family.</text>
</comment>
<sequence>HDRPKFCYLPADPGECMA</sequence>
<dbReference type="GO" id="GO:0005576">
    <property type="term" value="C:extracellular region"/>
    <property type="evidence" value="ECO:0007669"/>
    <property type="project" value="UniProtKB-SubCell"/>
</dbReference>
<dbReference type="GO" id="GO:0004867">
    <property type="term" value="F:serine-type endopeptidase inhibitor activity"/>
    <property type="evidence" value="ECO:0007669"/>
    <property type="project" value="UniProtKB-KW"/>
</dbReference>
<protein>
    <recommendedName>
        <fullName>Kunitz-type serine protease inhibitor C9</fullName>
    </recommendedName>
    <alternativeName>
        <fullName evidence="5">BPTI-9</fullName>
    </alternativeName>
    <alternativeName>
        <fullName>Chymotrypsin inhibitor 9</fullName>
    </alternativeName>
    <alternativeName>
        <fullName evidence="5">Chymotrypsin inhibitor C9</fullName>
    </alternativeName>
</protein>
<proteinExistence type="evidence at protein level"/>
<evidence type="ECO:0000250" key="1"/>
<evidence type="ECO:0000250" key="2">
    <source>
        <dbReference type="UniProtKB" id="P00992"/>
    </source>
</evidence>
<evidence type="ECO:0000255" key="3">
    <source>
        <dbReference type="PROSITE-ProRule" id="PRU00031"/>
    </source>
</evidence>
<evidence type="ECO:0000269" key="4">
    <source ref="1"/>
</evidence>
<evidence type="ECO:0000303" key="5">
    <source ref="1"/>
</evidence>
<evidence type="ECO:0000305" key="6"/>
<accession>P85040</accession>
<organism>
    <name type="scientific">Daboia siamensis</name>
    <name type="common">Eastern Russel's viper</name>
    <name type="synonym">Daboia russelii siamensis</name>
    <dbReference type="NCBI Taxonomy" id="343250"/>
    <lineage>
        <taxon>Eukaryota</taxon>
        <taxon>Metazoa</taxon>
        <taxon>Chordata</taxon>
        <taxon>Craniata</taxon>
        <taxon>Vertebrata</taxon>
        <taxon>Euteleostomi</taxon>
        <taxon>Lepidosauria</taxon>
        <taxon>Squamata</taxon>
        <taxon>Bifurcata</taxon>
        <taxon>Unidentata</taxon>
        <taxon>Episquamata</taxon>
        <taxon>Toxicofera</taxon>
        <taxon>Serpentes</taxon>
        <taxon>Colubroidea</taxon>
        <taxon>Viperidae</taxon>
        <taxon>Viperinae</taxon>
        <taxon>Daboia</taxon>
    </lineage>
</organism>
<keyword id="KW-0903">Direct protein sequencing</keyword>
<keyword id="KW-1015">Disulfide bond</keyword>
<keyword id="KW-0646">Protease inhibitor</keyword>
<keyword id="KW-0964">Secreted</keyword>
<keyword id="KW-0722">Serine protease inhibitor</keyword>